<dbReference type="EC" id="2.7.4.3" evidence="1"/>
<dbReference type="EMBL" id="AE017332">
    <property type="protein sequence ID" value="AAV27464.1"/>
    <property type="molecule type" value="Genomic_DNA"/>
</dbReference>
<dbReference type="RefSeq" id="WP_011206045.1">
    <property type="nucleotide sequence ID" value="NC_006360.1"/>
</dbReference>
<dbReference type="SMR" id="Q601J4"/>
<dbReference type="KEGG" id="mhy:mhp208"/>
<dbReference type="eggNOG" id="COG0563">
    <property type="taxonomic scope" value="Bacteria"/>
</dbReference>
<dbReference type="HOGENOM" id="CLU_032354_1_2_14"/>
<dbReference type="PhylomeDB" id="Q601J4"/>
<dbReference type="UniPathway" id="UPA00588">
    <property type="reaction ID" value="UER00649"/>
</dbReference>
<dbReference type="Proteomes" id="UP000006822">
    <property type="component" value="Chromosome"/>
</dbReference>
<dbReference type="GO" id="GO:0005737">
    <property type="term" value="C:cytoplasm"/>
    <property type="evidence" value="ECO:0007669"/>
    <property type="project" value="UniProtKB-SubCell"/>
</dbReference>
<dbReference type="GO" id="GO:0004017">
    <property type="term" value="F:adenylate kinase activity"/>
    <property type="evidence" value="ECO:0007669"/>
    <property type="project" value="UniProtKB-UniRule"/>
</dbReference>
<dbReference type="GO" id="GO:0005524">
    <property type="term" value="F:ATP binding"/>
    <property type="evidence" value="ECO:0007669"/>
    <property type="project" value="UniProtKB-UniRule"/>
</dbReference>
<dbReference type="GO" id="GO:0008270">
    <property type="term" value="F:zinc ion binding"/>
    <property type="evidence" value="ECO:0007669"/>
    <property type="project" value="UniProtKB-UniRule"/>
</dbReference>
<dbReference type="GO" id="GO:0044209">
    <property type="term" value="P:AMP salvage"/>
    <property type="evidence" value="ECO:0007669"/>
    <property type="project" value="UniProtKB-UniRule"/>
</dbReference>
<dbReference type="CDD" id="cd01428">
    <property type="entry name" value="ADK"/>
    <property type="match status" value="1"/>
</dbReference>
<dbReference type="Gene3D" id="3.40.50.300">
    <property type="entry name" value="P-loop containing nucleotide triphosphate hydrolases"/>
    <property type="match status" value="1"/>
</dbReference>
<dbReference type="HAMAP" id="MF_00235">
    <property type="entry name" value="Adenylate_kinase_Adk"/>
    <property type="match status" value="1"/>
</dbReference>
<dbReference type="InterPro" id="IPR006259">
    <property type="entry name" value="Adenyl_kin_sub"/>
</dbReference>
<dbReference type="InterPro" id="IPR000850">
    <property type="entry name" value="Adenylat/UMP-CMP_kin"/>
</dbReference>
<dbReference type="InterPro" id="IPR033690">
    <property type="entry name" value="Adenylat_kinase_CS"/>
</dbReference>
<dbReference type="InterPro" id="IPR007862">
    <property type="entry name" value="Adenylate_kinase_lid-dom"/>
</dbReference>
<dbReference type="InterPro" id="IPR036193">
    <property type="entry name" value="ADK_active_lid_dom_sf"/>
</dbReference>
<dbReference type="InterPro" id="IPR027417">
    <property type="entry name" value="P-loop_NTPase"/>
</dbReference>
<dbReference type="NCBIfam" id="TIGR01351">
    <property type="entry name" value="adk"/>
    <property type="match status" value="1"/>
</dbReference>
<dbReference type="PANTHER" id="PTHR23359">
    <property type="entry name" value="NUCLEOTIDE KINASE"/>
    <property type="match status" value="1"/>
</dbReference>
<dbReference type="Pfam" id="PF00406">
    <property type="entry name" value="ADK"/>
    <property type="match status" value="1"/>
</dbReference>
<dbReference type="Pfam" id="PF05191">
    <property type="entry name" value="ADK_lid"/>
    <property type="match status" value="1"/>
</dbReference>
<dbReference type="PRINTS" id="PR00094">
    <property type="entry name" value="ADENYLTKNASE"/>
</dbReference>
<dbReference type="SUPFAM" id="SSF57774">
    <property type="entry name" value="Microbial and mitochondrial ADK, insert 'zinc finger' domain"/>
    <property type="match status" value="1"/>
</dbReference>
<dbReference type="SUPFAM" id="SSF52540">
    <property type="entry name" value="P-loop containing nucleoside triphosphate hydrolases"/>
    <property type="match status" value="1"/>
</dbReference>
<dbReference type="PROSITE" id="PS00113">
    <property type="entry name" value="ADENYLATE_KINASE"/>
    <property type="match status" value="1"/>
</dbReference>
<protein>
    <recommendedName>
        <fullName evidence="1">Adenylate kinase</fullName>
        <shortName evidence="1">AK</shortName>
        <ecNumber evidence="1">2.7.4.3</ecNumber>
    </recommendedName>
    <alternativeName>
        <fullName evidence="1">ATP-AMP transphosphorylase</fullName>
    </alternativeName>
    <alternativeName>
        <fullName evidence="1">ATP:AMP phosphotransferase</fullName>
    </alternativeName>
    <alternativeName>
        <fullName evidence="1">Adenylate monophosphate kinase</fullName>
    </alternativeName>
</protein>
<accession>Q601J4</accession>
<comment type="function">
    <text evidence="1">Catalyzes the reversible transfer of the terminal phosphate group between ATP and AMP. Plays an important role in cellular energy homeostasis and in adenine nucleotide metabolism.</text>
</comment>
<comment type="catalytic activity">
    <reaction evidence="1">
        <text>AMP + ATP = 2 ADP</text>
        <dbReference type="Rhea" id="RHEA:12973"/>
        <dbReference type="ChEBI" id="CHEBI:30616"/>
        <dbReference type="ChEBI" id="CHEBI:456215"/>
        <dbReference type="ChEBI" id="CHEBI:456216"/>
        <dbReference type="EC" id="2.7.4.3"/>
    </reaction>
</comment>
<comment type="pathway">
    <text evidence="1">Purine metabolism; AMP biosynthesis via salvage pathway; AMP from ADP: step 1/1.</text>
</comment>
<comment type="subunit">
    <text evidence="1">Monomer.</text>
</comment>
<comment type="subcellular location">
    <subcellularLocation>
        <location evidence="1">Cytoplasm</location>
    </subcellularLocation>
</comment>
<comment type="domain">
    <text evidence="1">Consists of three domains, a large central CORE domain and two small peripheral domains, NMPbind and LID, which undergo movements during catalysis. The LID domain closes over the site of phosphoryl transfer upon ATP binding. Assembling and dissambling the active center during each catalytic cycle provides an effective means to prevent ATP hydrolysis. Some bacteria have evolved a zinc-coordinating structure that stabilizes the LID domain.</text>
</comment>
<comment type="similarity">
    <text evidence="1">Belongs to the adenylate kinase family.</text>
</comment>
<feature type="chain" id="PRO_0000158798" description="Adenylate kinase">
    <location>
        <begin position="1"/>
        <end position="212"/>
    </location>
</feature>
<feature type="region of interest" description="NMP" evidence="1">
    <location>
        <begin position="34"/>
        <end position="63"/>
    </location>
</feature>
<feature type="region of interest" description="LID" evidence="1">
    <location>
        <begin position="126"/>
        <end position="163"/>
    </location>
</feature>
<feature type="binding site" evidence="1">
    <location>
        <begin position="14"/>
        <end position="19"/>
    </location>
    <ligand>
        <name>ATP</name>
        <dbReference type="ChEBI" id="CHEBI:30616"/>
    </ligand>
</feature>
<feature type="binding site" evidence="1">
    <location>
        <position position="35"/>
    </location>
    <ligand>
        <name>AMP</name>
        <dbReference type="ChEBI" id="CHEBI:456215"/>
    </ligand>
</feature>
<feature type="binding site" evidence="1">
    <location>
        <position position="40"/>
    </location>
    <ligand>
        <name>AMP</name>
        <dbReference type="ChEBI" id="CHEBI:456215"/>
    </ligand>
</feature>
<feature type="binding site" evidence="1">
    <location>
        <begin position="61"/>
        <end position="63"/>
    </location>
    <ligand>
        <name>AMP</name>
        <dbReference type="ChEBI" id="CHEBI:456215"/>
    </ligand>
</feature>
<feature type="binding site" evidence="1">
    <location>
        <begin position="89"/>
        <end position="92"/>
    </location>
    <ligand>
        <name>AMP</name>
        <dbReference type="ChEBI" id="CHEBI:456215"/>
    </ligand>
</feature>
<feature type="binding site" evidence="1">
    <location>
        <position position="96"/>
    </location>
    <ligand>
        <name>AMP</name>
        <dbReference type="ChEBI" id="CHEBI:456215"/>
    </ligand>
</feature>
<feature type="binding site" evidence="1">
    <location>
        <position position="127"/>
    </location>
    <ligand>
        <name>ATP</name>
        <dbReference type="ChEBI" id="CHEBI:30616"/>
    </ligand>
</feature>
<feature type="binding site" evidence="1">
    <location>
        <position position="130"/>
    </location>
    <ligand>
        <name>Zn(2+)</name>
        <dbReference type="ChEBI" id="CHEBI:29105"/>
        <note>structural</note>
    </ligand>
</feature>
<feature type="binding site" evidence="1">
    <location>
        <position position="133"/>
    </location>
    <ligand>
        <name>Zn(2+)</name>
        <dbReference type="ChEBI" id="CHEBI:29105"/>
        <note>structural</note>
    </ligand>
</feature>
<feature type="binding site" evidence="1">
    <location>
        <begin position="136"/>
        <end position="137"/>
    </location>
    <ligand>
        <name>ATP</name>
        <dbReference type="ChEBI" id="CHEBI:30616"/>
    </ligand>
</feature>
<feature type="binding site" evidence="1">
    <location>
        <position position="150"/>
    </location>
    <ligand>
        <name>Zn(2+)</name>
        <dbReference type="ChEBI" id="CHEBI:29105"/>
        <note>structural</note>
    </ligand>
</feature>
<feature type="binding site" evidence="1">
    <location>
        <position position="153"/>
    </location>
    <ligand>
        <name>Zn(2+)</name>
        <dbReference type="ChEBI" id="CHEBI:29105"/>
        <note>structural</note>
    </ligand>
</feature>
<feature type="binding site" evidence="1">
    <location>
        <position position="160"/>
    </location>
    <ligand>
        <name>AMP</name>
        <dbReference type="ChEBI" id="CHEBI:456215"/>
    </ligand>
</feature>
<feature type="binding site" evidence="1">
    <location>
        <position position="171"/>
    </location>
    <ligand>
        <name>AMP</name>
        <dbReference type="ChEBI" id="CHEBI:456215"/>
    </ligand>
</feature>
<feature type="binding site" evidence="1">
    <location>
        <position position="199"/>
    </location>
    <ligand>
        <name>ATP</name>
        <dbReference type="ChEBI" id="CHEBI:30616"/>
    </ligand>
</feature>
<evidence type="ECO:0000255" key="1">
    <source>
        <dbReference type="HAMAP-Rule" id="MF_00235"/>
    </source>
</evidence>
<proteinExistence type="inferred from homology"/>
<sequence>MKSNKKILFIGAPGSGKGTISKILVEKYKLVHISTGDLFRKKISEDSRFAAQIQNYLSSGSYVPDEITNKLVADFIKKIPKNQGYILDGYPRTLQQLEFMIKNGINLDCVFYLKIKNETIISRLSQRLFCQKCQKSYNLLLAKPKNGLKCDLDNTDLITRNDDRPEIITHRIEKFNNSVIPIVEFFKKSGIIYYLDAEQTLEETVIEIEKWL</sequence>
<keyword id="KW-0067">ATP-binding</keyword>
<keyword id="KW-0963">Cytoplasm</keyword>
<keyword id="KW-0418">Kinase</keyword>
<keyword id="KW-0479">Metal-binding</keyword>
<keyword id="KW-0545">Nucleotide biosynthesis</keyword>
<keyword id="KW-0547">Nucleotide-binding</keyword>
<keyword id="KW-0808">Transferase</keyword>
<keyword id="KW-0862">Zinc</keyword>
<organism>
    <name type="scientific">Mesomycoplasma hyopneumoniae (strain 232)</name>
    <name type="common">Mycoplasma hyopneumoniae</name>
    <dbReference type="NCBI Taxonomy" id="295358"/>
    <lineage>
        <taxon>Bacteria</taxon>
        <taxon>Bacillati</taxon>
        <taxon>Mycoplasmatota</taxon>
        <taxon>Mycoplasmoidales</taxon>
        <taxon>Metamycoplasmataceae</taxon>
        <taxon>Mesomycoplasma</taxon>
    </lineage>
</organism>
<reference key="1">
    <citation type="journal article" date="2004" name="J. Bacteriol.">
        <title>The genome sequence of Mycoplasma hyopneumoniae strain 232, the agent of swine mycoplasmosis.</title>
        <authorList>
            <person name="Minion F.C."/>
            <person name="Lefkowitz E.J."/>
            <person name="Madsen M.L."/>
            <person name="Cleary B.J."/>
            <person name="Swartzell S.M."/>
            <person name="Mahairas G.G."/>
        </authorList>
    </citation>
    <scope>NUCLEOTIDE SEQUENCE [LARGE SCALE GENOMIC DNA]</scope>
    <source>
        <strain>232</strain>
    </source>
</reference>
<name>KAD_MESH2</name>
<gene>
    <name evidence="1" type="primary">adk</name>
    <name type="ordered locus">mhp208</name>
</gene>